<sequence>MSTNQQQQANPSAAVAAPAASSEYLKRTCLICGCHTNQTINIYEPRSGPNIVQLIQAKFKFQPLNEDKFLCFSCNNWLINWHSLQAVNSNEAESQSQSPSHMGNSVLQQERTKLRPVAMVRPTVRVQPQSQPQLQPQVPINPTPAPIVYSKRRASRRSASVSRMSRVLRQCCVESLRRSPKKRNQQSVFVCLRPQGQKRSNAICKVECVAPRRKPVERLVKDVAATATPTPVLNTQSTPTYQRFPQPSVDGKVVAMFRRLGTTLSREEPAAYSAESNPACSKLPQIMSPLKEAPRWTRDLDDDEILLEFDTAISEVLPTARYQVTHEENKENQQAQEMELELEEEEEVDGRAELEVVQEAEAPLEPQSHHKQGNSHQNSHQASIQLAGLRLPMGLSISLV</sequence>
<feature type="chain" id="PRO_0000058418" description="Protein phyllopod">
    <location>
        <begin position="1"/>
        <end position="400"/>
    </location>
</feature>
<feature type="region of interest" description="Interaction with sina">
    <location>
        <begin position="109"/>
        <end position="127"/>
    </location>
</feature>
<feature type="region of interest" description="Disordered" evidence="2">
    <location>
        <begin position="125"/>
        <end position="145"/>
    </location>
</feature>
<feature type="region of interest" description="Interaction with ttk">
    <location>
        <begin position="241"/>
        <end position="320"/>
    </location>
</feature>
<feature type="region of interest" description="Disordered" evidence="2">
    <location>
        <begin position="346"/>
        <end position="382"/>
    </location>
</feature>
<feature type="coiled-coil region" evidence="1">
    <location>
        <begin position="319"/>
        <end position="362"/>
    </location>
</feature>
<feature type="compositionally biased region" description="Low complexity" evidence="2">
    <location>
        <begin position="127"/>
        <end position="138"/>
    </location>
</feature>
<feature type="mutagenesis site" description="Induces a twofold reduction in interaction with sina and impairs ttk degradation." evidence="4">
    <original>QE</original>
    <variation>AA</variation>
    <location>
        <begin position="109"/>
        <end position="110"/>
    </location>
</feature>
<feature type="mutagenesis site" description="No effect in interaction with sina or ttk degradation." evidence="4">
    <original>RT</original>
    <variation>AA</variation>
    <location>
        <begin position="111"/>
        <end position="112"/>
    </location>
</feature>
<feature type="mutagenesis site" description="No effect in interaction with sina or ttk degradation." evidence="4">
    <original>KL</original>
    <variation>AA</variation>
    <location>
        <begin position="113"/>
        <end position="114"/>
    </location>
</feature>
<feature type="mutagenesis site" description="No effect in interaction with sina or ttk degradation." evidence="4">
    <original>RP</original>
    <variation>AA</variation>
    <location>
        <begin position="115"/>
        <end position="116"/>
    </location>
</feature>
<feature type="mutagenesis site" description="Induces a fourfold reduction in interaction with sina and impairs ttk degradation." evidence="4">
    <original>MV</original>
    <variation>AA</variation>
    <location>
        <begin position="119"/>
        <end position="120"/>
    </location>
</feature>
<feature type="mutagenesis site" description="Induces a twofold reduction in interaction with sina and impairs ttk degradation." evidence="4">
    <original>RP</original>
    <variation>AA</variation>
    <location>
        <begin position="121"/>
        <end position="122"/>
    </location>
</feature>
<feature type="sequence conflict" description="In Ref. 1; AAA66168 and 2; AAA65733." evidence="10" ref="1 2">
    <location>
        <begin position="127"/>
        <end position="130"/>
    </location>
</feature>
<feature type="sequence conflict" description="In Ref. 2; AAA65733." evidence="10" ref="2">
    <original>Q</original>
    <variation>K</variation>
    <location>
        <position position="236"/>
    </location>
</feature>
<feature type="sequence conflict" description="In Ref. 2; AAA65733." evidence="10" ref="2">
    <original>A</original>
    <variation>T</variation>
    <location>
        <position position="293"/>
    </location>
</feature>
<feature type="sequence conflict" description="In Ref. 1; AAA66168 and 2; AAA65733." evidence="10" ref="1 2">
    <original>L</original>
    <variation>LEEEEE</variation>
    <location>
        <position position="342"/>
    </location>
</feature>
<feature type="strand" evidence="11">
    <location>
        <begin position="117"/>
        <end position="120"/>
    </location>
</feature>
<reference key="1">
    <citation type="journal article" date="1995" name="Cell">
        <title>Control of Drosophila photoreceptor cell fates by phyllopod, a novel nuclear protein acting downstream of the Raf kinase.</title>
        <authorList>
            <person name="Dickson B.J."/>
            <person name="Dominguez M."/>
            <person name="Der Straten A."/>
            <person name="Hafen E."/>
        </authorList>
    </citation>
    <scope>NUCLEOTIDE SEQUENCE [MRNA]</scope>
    <scope>FUNCTION</scope>
    <scope>SUBCELLULAR LOCATION</scope>
    <scope>TISSUE SPECIFICITY</scope>
</reference>
<reference key="2">
    <citation type="journal article" date="1995" name="Cell">
        <title>Phyllopod functions in the fate determination of a subset of photoreceptors in Drosophila.</title>
        <authorList>
            <person name="Chang H.C."/>
            <person name="Solomon N.M."/>
            <person name="Wassarman D.A."/>
            <person name="Karim F.D."/>
            <person name="Therrien M."/>
            <person name="Rubin G.M."/>
            <person name="Wolff T."/>
        </authorList>
    </citation>
    <scope>NUCLEOTIDE SEQUENCE [GENOMIC DNA / MRNA]</scope>
    <scope>FUNCTION</scope>
    <scope>SUBCELLULAR LOCATION</scope>
    <scope>TISSUE SPECIFICITY</scope>
    <source>
        <strain>Canton-S</strain>
        <tissue>Eye imaginal disk</tissue>
    </source>
</reference>
<reference key="3">
    <citation type="journal article" date="2000" name="Science">
        <title>The genome sequence of Drosophila melanogaster.</title>
        <authorList>
            <person name="Adams M.D."/>
            <person name="Celniker S.E."/>
            <person name="Holt R.A."/>
            <person name="Evans C.A."/>
            <person name="Gocayne J.D."/>
            <person name="Amanatides P.G."/>
            <person name="Scherer S.E."/>
            <person name="Li P.W."/>
            <person name="Hoskins R.A."/>
            <person name="Galle R.F."/>
            <person name="George R.A."/>
            <person name="Lewis S.E."/>
            <person name="Richards S."/>
            <person name="Ashburner M."/>
            <person name="Henderson S.N."/>
            <person name="Sutton G.G."/>
            <person name="Wortman J.R."/>
            <person name="Yandell M.D."/>
            <person name="Zhang Q."/>
            <person name="Chen L.X."/>
            <person name="Brandon R.C."/>
            <person name="Rogers Y.-H.C."/>
            <person name="Blazej R.G."/>
            <person name="Champe M."/>
            <person name="Pfeiffer B.D."/>
            <person name="Wan K.H."/>
            <person name="Doyle C."/>
            <person name="Baxter E.G."/>
            <person name="Helt G."/>
            <person name="Nelson C.R."/>
            <person name="Miklos G.L.G."/>
            <person name="Abril J.F."/>
            <person name="Agbayani A."/>
            <person name="An H.-J."/>
            <person name="Andrews-Pfannkoch C."/>
            <person name="Baldwin D."/>
            <person name="Ballew R.M."/>
            <person name="Basu A."/>
            <person name="Baxendale J."/>
            <person name="Bayraktaroglu L."/>
            <person name="Beasley E.M."/>
            <person name="Beeson K.Y."/>
            <person name="Benos P.V."/>
            <person name="Berman B.P."/>
            <person name="Bhandari D."/>
            <person name="Bolshakov S."/>
            <person name="Borkova D."/>
            <person name="Botchan M.R."/>
            <person name="Bouck J."/>
            <person name="Brokstein P."/>
            <person name="Brottier P."/>
            <person name="Burtis K.C."/>
            <person name="Busam D.A."/>
            <person name="Butler H."/>
            <person name="Cadieu E."/>
            <person name="Center A."/>
            <person name="Chandra I."/>
            <person name="Cherry J.M."/>
            <person name="Cawley S."/>
            <person name="Dahlke C."/>
            <person name="Davenport L.B."/>
            <person name="Davies P."/>
            <person name="de Pablos B."/>
            <person name="Delcher A."/>
            <person name="Deng Z."/>
            <person name="Mays A.D."/>
            <person name="Dew I."/>
            <person name="Dietz S.M."/>
            <person name="Dodson K."/>
            <person name="Doup L.E."/>
            <person name="Downes M."/>
            <person name="Dugan-Rocha S."/>
            <person name="Dunkov B.C."/>
            <person name="Dunn P."/>
            <person name="Durbin K.J."/>
            <person name="Evangelista C.C."/>
            <person name="Ferraz C."/>
            <person name="Ferriera S."/>
            <person name="Fleischmann W."/>
            <person name="Fosler C."/>
            <person name="Gabrielian A.E."/>
            <person name="Garg N.S."/>
            <person name="Gelbart W.M."/>
            <person name="Glasser K."/>
            <person name="Glodek A."/>
            <person name="Gong F."/>
            <person name="Gorrell J.H."/>
            <person name="Gu Z."/>
            <person name="Guan P."/>
            <person name="Harris M."/>
            <person name="Harris N.L."/>
            <person name="Harvey D.A."/>
            <person name="Heiman T.J."/>
            <person name="Hernandez J.R."/>
            <person name="Houck J."/>
            <person name="Hostin D."/>
            <person name="Houston K.A."/>
            <person name="Howland T.J."/>
            <person name="Wei M.-H."/>
            <person name="Ibegwam C."/>
            <person name="Jalali M."/>
            <person name="Kalush F."/>
            <person name="Karpen G.H."/>
            <person name="Ke Z."/>
            <person name="Kennison J.A."/>
            <person name="Ketchum K.A."/>
            <person name="Kimmel B.E."/>
            <person name="Kodira C.D."/>
            <person name="Kraft C.L."/>
            <person name="Kravitz S."/>
            <person name="Kulp D."/>
            <person name="Lai Z."/>
            <person name="Lasko P."/>
            <person name="Lei Y."/>
            <person name="Levitsky A.A."/>
            <person name="Li J.H."/>
            <person name="Li Z."/>
            <person name="Liang Y."/>
            <person name="Lin X."/>
            <person name="Liu X."/>
            <person name="Mattei B."/>
            <person name="McIntosh T.C."/>
            <person name="McLeod M.P."/>
            <person name="McPherson D."/>
            <person name="Merkulov G."/>
            <person name="Milshina N.V."/>
            <person name="Mobarry C."/>
            <person name="Morris J."/>
            <person name="Moshrefi A."/>
            <person name="Mount S.M."/>
            <person name="Moy M."/>
            <person name="Murphy B."/>
            <person name="Murphy L."/>
            <person name="Muzny D.M."/>
            <person name="Nelson D.L."/>
            <person name="Nelson D.R."/>
            <person name="Nelson K.A."/>
            <person name="Nixon K."/>
            <person name="Nusskern D.R."/>
            <person name="Pacleb J.M."/>
            <person name="Palazzolo M."/>
            <person name="Pittman G.S."/>
            <person name="Pan S."/>
            <person name="Pollard J."/>
            <person name="Puri V."/>
            <person name="Reese M.G."/>
            <person name="Reinert K."/>
            <person name="Remington K."/>
            <person name="Saunders R.D.C."/>
            <person name="Scheeler F."/>
            <person name="Shen H."/>
            <person name="Shue B.C."/>
            <person name="Siden-Kiamos I."/>
            <person name="Simpson M."/>
            <person name="Skupski M.P."/>
            <person name="Smith T.J."/>
            <person name="Spier E."/>
            <person name="Spradling A.C."/>
            <person name="Stapleton M."/>
            <person name="Strong R."/>
            <person name="Sun E."/>
            <person name="Svirskas R."/>
            <person name="Tector C."/>
            <person name="Turner R."/>
            <person name="Venter E."/>
            <person name="Wang A.H."/>
            <person name="Wang X."/>
            <person name="Wang Z.-Y."/>
            <person name="Wassarman D.A."/>
            <person name="Weinstock G.M."/>
            <person name="Weissenbach J."/>
            <person name="Williams S.M."/>
            <person name="Woodage T."/>
            <person name="Worley K.C."/>
            <person name="Wu D."/>
            <person name="Yang S."/>
            <person name="Yao Q.A."/>
            <person name="Ye J."/>
            <person name="Yeh R.-F."/>
            <person name="Zaveri J.S."/>
            <person name="Zhan M."/>
            <person name="Zhang G."/>
            <person name="Zhao Q."/>
            <person name="Zheng L."/>
            <person name="Zheng X.H."/>
            <person name="Zhong F.N."/>
            <person name="Zhong W."/>
            <person name="Zhou X."/>
            <person name="Zhu S.C."/>
            <person name="Zhu X."/>
            <person name="Smith H.O."/>
            <person name="Gibbs R.A."/>
            <person name="Myers E.W."/>
            <person name="Rubin G.M."/>
            <person name="Venter J.C."/>
        </authorList>
    </citation>
    <scope>NUCLEOTIDE SEQUENCE [LARGE SCALE GENOMIC DNA]</scope>
    <source>
        <strain>Berkeley</strain>
    </source>
</reference>
<reference key="4">
    <citation type="journal article" date="2002" name="Genome Biol.">
        <title>Annotation of the Drosophila melanogaster euchromatic genome: a systematic review.</title>
        <authorList>
            <person name="Misra S."/>
            <person name="Crosby M.A."/>
            <person name="Mungall C.J."/>
            <person name="Matthews B.B."/>
            <person name="Campbell K.S."/>
            <person name="Hradecky P."/>
            <person name="Huang Y."/>
            <person name="Kaminker J.S."/>
            <person name="Millburn G.H."/>
            <person name="Prochnik S.E."/>
            <person name="Smith C.D."/>
            <person name="Tupy J.L."/>
            <person name="Whitfield E.J."/>
            <person name="Bayraktaroglu L."/>
            <person name="Berman B.P."/>
            <person name="Bettencourt B.R."/>
            <person name="Celniker S.E."/>
            <person name="de Grey A.D.N.J."/>
            <person name="Drysdale R.A."/>
            <person name="Harris N.L."/>
            <person name="Richter J."/>
            <person name="Russo S."/>
            <person name="Schroeder A.J."/>
            <person name="Shu S.Q."/>
            <person name="Stapleton M."/>
            <person name="Yamada C."/>
            <person name="Ashburner M."/>
            <person name="Gelbart W.M."/>
            <person name="Rubin G.M."/>
            <person name="Lewis S.E."/>
        </authorList>
    </citation>
    <scope>GENOME REANNOTATION</scope>
    <source>
        <strain>Berkeley</strain>
    </source>
</reference>
<reference key="5">
    <citation type="journal article" date="2002" name="Genome Biol.">
        <title>A Drosophila full-length cDNA resource.</title>
        <authorList>
            <person name="Stapleton M."/>
            <person name="Carlson J.W."/>
            <person name="Brokstein P."/>
            <person name="Yu C."/>
            <person name="Champe M."/>
            <person name="George R.A."/>
            <person name="Guarin H."/>
            <person name="Kronmiller B."/>
            <person name="Pacleb J.M."/>
            <person name="Park S."/>
            <person name="Wan K.H."/>
            <person name="Rubin G.M."/>
            <person name="Celniker S.E."/>
        </authorList>
    </citation>
    <scope>NUCLEOTIDE SEQUENCE [LARGE SCALE MRNA]</scope>
    <source>
        <strain>Berkeley</strain>
        <tissue>Head</tissue>
    </source>
</reference>
<reference key="6">
    <citation type="submission" date="2009-03" db="EMBL/GenBank/DDBJ databases">
        <authorList>
            <person name="Carlson J.W."/>
            <person name="Booth B."/>
            <person name="Frise E."/>
            <person name="Park S."/>
            <person name="Wan K.H."/>
            <person name="Yu C."/>
            <person name="Celniker S.E."/>
        </authorList>
    </citation>
    <scope>NUCLEOTIDE SEQUENCE [LARGE SCALE MRNA]</scope>
    <source>
        <strain>Berkeley</strain>
    </source>
</reference>
<reference key="7">
    <citation type="journal article" date="1997" name="Cell">
        <title>PHYL acts to down-regulate TTK88, a transcriptional repressor of neuronal cell fates, by a SINA-dependent mechanism.</title>
        <authorList>
            <person name="Tang A.H."/>
            <person name="Neufeld T.P."/>
            <person name="Kwan E."/>
            <person name="Rubin G.M."/>
        </authorList>
    </citation>
    <scope>FUNCTION IN TTK DEGRADATION</scope>
    <scope>INTERACTION WITH SINA</scope>
</reference>
<reference key="8">
    <citation type="journal article" date="1997" name="Cell">
        <title>Photoreceptor cell differentiation requires regulated proteolysis of the transcriptional repressor Tramtrack.</title>
        <authorList>
            <person name="Li S."/>
            <person name="Li Y."/>
            <person name="Carthew R.W."/>
            <person name="Lai Z.-C."/>
        </authorList>
    </citation>
    <scope>FUNCTION IN TTK DEGRADATION</scope>
    <scope>INTERACTION WITH SINA</scope>
</reference>
<reference key="9">
    <citation type="journal article" date="2000" name="EMBO J.">
        <title>A role for Ebi in neuronal cell cycle control.</title>
        <authorList>
            <person name="Boulton S.J."/>
            <person name="Brook A."/>
            <person name="Staehling-Hampton K."/>
            <person name="Heitzler P."/>
            <person name="Dyson N."/>
        </authorList>
    </citation>
    <scope>COMPONENT OF A COMPLEX WITH EBI AND SINA</scope>
</reference>
<reference key="10">
    <citation type="journal article" date="2001" name="Development">
        <title>A dual function of phyllopod in Drosophila external sensory organ development: cell fate specification of sensory organ precursor and its progeny.</title>
        <authorList>
            <person name="Pi H."/>
            <person name="Wu H.-J."/>
            <person name="Chien C.-T."/>
        </authorList>
    </citation>
    <scope>FUNCTION</scope>
    <scope>TISSUE SPECIFICITY</scope>
    <scope>DEVELOPMENTAL STAGE</scope>
    <scope>INDUCTION</scope>
</reference>
<reference key="11">
    <citation type="journal article" date="2002" name="Mol. Cell. Biol.">
        <title>Phyllopod acts as an adaptor protein to link the sina ubiquitin ligase to the substrate protein tramtrack.</title>
        <authorList>
            <person name="Li S."/>
            <person name="Xu C."/>
            <person name="Carthew R.W."/>
        </authorList>
    </citation>
    <scope>FUNCTION IN THE COMPLEX</scope>
    <scope>MUTAGENESIS OF 109-GLN-GLU-110; 111-ARG-THR-112; 113-LYS-LEU-114; 115-ARG-PRO-116; 119-MET-VAL-120 AND 121-ARG-PRO-122</scope>
</reference>
<reference key="12">
    <citation type="journal article" date="2003" name="Development">
        <title>Notch and Ras signaling pathway effector genes expressed in fusion competent and founder cells during Drosophila myogenesis.</title>
        <authorList>
            <person name="Artero R."/>
            <person name="Furlong E.E."/>
            <person name="Beckett K."/>
            <person name="Scott M.P."/>
            <person name="Baylies M."/>
        </authorList>
    </citation>
    <scope>FUNCTION</scope>
</reference>
<organism>
    <name type="scientific">Drosophila melanogaster</name>
    <name type="common">Fruit fly</name>
    <dbReference type="NCBI Taxonomy" id="7227"/>
    <lineage>
        <taxon>Eukaryota</taxon>
        <taxon>Metazoa</taxon>
        <taxon>Ecdysozoa</taxon>
        <taxon>Arthropoda</taxon>
        <taxon>Hexapoda</taxon>
        <taxon>Insecta</taxon>
        <taxon>Pterygota</taxon>
        <taxon>Neoptera</taxon>
        <taxon>Endopterygota</taxon>
        <taxon>Diptera</taxon>
        <taxon>Brachycera</taxon>
        <taxon>Muscomorpha</taxon>
        <taxon>Ephydroidea</taxon>
        <taxon>Drosophilidae</taxon>
        <taxon>Drosophila</taxon>
        <taxon>Sophophora</taxon>
    </lineage>
</organism>
<gene>
    <name type="primary">phyl</name>
    <name type="ORF">CG10108</name>
</gene>
<evidence type="ECO:0000255" key="1"/>
<evidence type="ECO:0000256" key="2">
    <source>
        <dbReference type="SAM" id="MobiDB-lite"/>
    </source>
</evidence>
<evidence type="ECO:0000269" key="3">
    <source>
    </source>
</evidence>
<evidence type="ECO:0000269" key="4">
    <source>
    </source>
</evidence>
<evidence type="ECO:0000269" key="5">
    <source>
    </source>
</evidence>
<evidence type="ECO:0000269" key="6">
    <source>
    </source>
</evidence>
<evidence type="ECO:0000269" key="7">
    <source>
    </source>
</evidence>
<evidence type="ECO:0000269" key="8">
    <source>
    </source>
</evidence>
<evidence type="ECO:0000269" key="9">
    <source>
    </source>
</evidence>
<evidence type="ECO:0000305" key="10"/>
<evidence type="ECO:0007829" key="11">
    <source>
        <dbReference type="PDB" id="4I7D"/>
    </source>
</evidence>
<comment type="function">
    <text evidence="3 4 5 6 7 8 9">Essential adapter component of E3 ubiquitin ligase complexes; involved in R7 photoreceptor cell differentiation, embryonic nervous system, external sensory organ development and specification of particular muscles. E3 ubiquitin ligase complexes mediate ubiquitination and subsequent proteasomal degradation of target proteins. Required for specification of R7 photoreceptor cell fate in the eye by participating in the ubiquitination and subsequent proteasomal degradation of Tramtrack (ttk), a general inhibitor of photoreceptor differentiation. Acts downstream of Notch signaling to specify the fate of the SOP (sensory organ precursor) cells and their progeny, probably via the sina-mediated proteasomal degradation of ttk. Its restricted pattern of expression, upon Notch and Ras signaling pathways, suggests that it acts as a key determinant in E3 complexes to trigger protein proteolysis in appropriate cells.</text>
</comment>
<comment type="subunit">
    <text>Component of some E3 complex at least composed of sina, ebi and phyl, required for the degradation of ttk.</text>
</comment>
<comment type="interaction">
    <interactant intactId="EBI-77033">
        <id>Q27934</id>
    </interactant>
    <interactant intactId="EBI-421390">
        <id>Q95RJ9</id>
        <label>ebi</label>
    </interactant>
    <organismsDiffer>false</organismsDiffer>
    <experiments>3</experiments>
</comment>
<comment type="interaction">
    <interactant intactId="EBI-77033">
        <id>Q27934</id>
    </interactant>
    <interactant intactId="EBI-77019">
        <id>P21461</id>
        <label>sina</label>
    </interactant>
    <organismsDiffer>false</organismsDiffer>
    <experiments>11</experiments>
</comment>
<comment type="interaction">
    <interactant intactId="EBI-77033">
        <id>Q27934</id>
    </interactant>
    <interactant intactId="EBI-77008">
        <id>P42282</id>
        <label>ttk</label>
    </interactant>
    <organismsDiffer>false</organismsDiffer>
    <experiments>10</experiments>
</comment>
<comment type="interaction">
    <interactant intactId="EBI-77033">
        <id>Q27934</id>
    </interactant>
    <interactant intactId="EBI-446761">
        <id>P61092</id>
        <label>Siah1a</label>
    </interactant>
    <organismsDiffer>true</organismsDiffer>
    <experiments>2</experiments>
</comment>
<comment type="subcellular location">
    <subcellularLocation>
        <location evidence="6 7">Nucleus</location>
    </subcellularLocation>
</comment>
<comment type="tissue specificity">
    <text evidence="3 6 7">In embryos, it is ubiquitously present before cellularization. During stages 9-11, it is expressed in neuroblasts and the SOP cells. From stage 12 onward, it decreases, but remains in a subset of PNS cells at stages 12-14. Weakly expressed in wing imaginal disks, in the SOP cells of wing margin bristles, notal macrochaetes, and other sensory organs. In leg disks, it is expressed in the precursors of the femoral chordotonal organs, as well as in external sensory SOP cells. Strongly expressed in the eye-antenna disk, it is specifically expressed in R1, R6 and R7 cells, and not in R3, R3, R4, R5 and R8 cells.</text>
</comment>
<comment type="developmental stage">
    <text evidence="3">Expressed both maternally and zygotically.</text>
</comment>
<comment type="induction">
    <text evidence="3">Activated by the Ras1/MAPK pathway in R1, R6 and R7 cells in the eye. Down-regulated by the Notch pathway.</text>
</comment>
<protein>
    <recommendedName>
        <fullName>Protein phyllopod</fullName>
    </recommendedName>
</protein>
<dbReference type="EMBL" id="L38294">
    <property type="protein sequence ID" value="AAA66168.1"/>
    <property type="molecule type" value="mRNA"/>
</dbReference>
<dbReference type="EMBL" id="U19722">
    <property type="protein sequence ID" value="AAA65733.1"/>
    <property type="molecule type" value="mRNA"/>
</dbReference>
<dbReference type="EMBL" id="U19731">
    <property type="protein sequence ID" value="AAB60231.1"/>
    <property type="molecule type" value="Genomic_DNA"/>
</dbReference>
<dbReference type="EMBL" id="AE013599">
    <property type="protein sequence ID" value="AAF58245.1"/>
    <property type="molecule type" value="Genomic_DNA"/>
</dbReference>
<dbReference type="EMBL" id="AY075531">
    <property type="protein sequence ID" value="AAL68338.1"/>
    <property type="molecule type" value="mRNA"/>
</dbReference>
<dbReference type="EMBL" id="BT072878">
    <property type="protein sequence ID" value="ACN67102.1"/>
    <property type="molecule type" value="mRNA"/>
</dbReference>
<dbReference type="PIR" id="A55647">
    <property type="entry name" value="A55647"/>
</dbReference>
<dbReference type="RefSeq" id="NP_725394.1">
    <property type="nucleotide sequence ID" value="NM_166055.2"/>
</dbReference>
<dbReference type="PDB" id="4I7B">
    <property type="method" value="X-ray"/>
    <property type="resolution" value="3.00 A"/>
    <property type="chains" value="B/D=113-125"/>
</dbReference>
<dbReference type="PDB" id="4I7C">
    <property type="method" value="X-ray"/>
    <property type="resolution" value="2.80 A"/>
    <property type="chains" value="B/D=113-125"/>
</dbReference>
<dbReference type="PDB" id="4I7D">
    <property type="method" value="X-ray"/>
    <property type="resolution" value="2.40 A"/>
    <property type="chains" value="B/D=113-125"/>
</dbReference>
<dbReference type="PDBsum" id="4I7B"/>
<dbReference type="PDBsum" id="4I7C"/>
<dbReference type="PDBsum" id="4I7D"/>
<dbReference type="SMR" id="Q27934"/>
<dbReference type="BioGRID" id="62356">
    <property type="interactions" value="51"/>
</dbReference>
<dbReference type="DIP" id="DIP-29101N"/>
<dbReference type="ELM" id="Q27934"/>
<dbReference type="FunCoup" id="Q27934">
    <property type="interactions" value="101"/>
</dbReference>
<dbReference type="IntAct" id="Q27934">
    <property type="interactions" value="7"/>
</dbReference>
<dbReference type="STRING" id="7227.FBpp0086645"/>
<dbReference type="GlyGen" id="Q27934">
    <property type="glycosylation" value="1 site"/>
</dbReference>
<dbReference type="PaxDb" id="7227-FBpp0086645"/>
<dbReference type="EnsemblMetazoa" id="FBtr0087516">
    <property type="protein sequence ID" value="FBpp0086645"/>
    <property type="gene ID" value="FBgn0013725"/>
</dbReference>
<dbReference type="GeneID" id="36606"/>
<dbReference type="KEGG" id="dme:Dmel_CG10108"/>
<dbReference type="UCSC" id="CG10108-RA">
    <property type="organism name" value="d. melanogaster"/>
</dbReference>
<dbReference type="AGR" id="FB:FBgn0013725"/>
<dbReference type="CTD" id="36606"/>
<dbReference type="FlyBase" id="FBgn0013725">
    <property type="gene designation" value="phyl"/>
</dbReference>
<dbReference type="VEuPathDB" id="VectorBase:FBgn0013725"/>
<dbReference type="eggNOG" id="ENOG502TC95">
    <property type="taxonomic scope" value="Eukaryota"/>
</dbReference>
<dbReference type="HOGENOM" id="CLU_636589_0_0_1"/>
<dbReference type="InParanoid" id="Q27934"/>
<dbReference type="OMA" id="SHMGNSV"/>
<dbReference type="OrthoDB" id="7959766at2759"/>
<dbReference type="PhylomeDB" id="Q27934"/>
<dbReference type="BioGRID-ORCS" id="36606">
    <property type="hits" value="0 hits in 1 CRISPR screen"/>
</dbReference>
<dbReference type="EvolutionaryTrace" id="Q27934"/>
<dbReference type="GenomeRNAi" id="36606"/>
<dbReference type="PRO" id="PR:Q27934"/>
<dbReference type="Proteomes" id="UP000000803">
    <property type="component" value="Chromosome 2R"/>
</dbReference>
<dbReference type="Bgee" id="FBgn0013725">
    <property type="expression patterns" value="Expressed in T neuron T5a (Drosophila) in embryonic/larval optic lobe (Drosophila) and 160 other cell types or tissues"/>
</dbReference>
<dbReference type="GO" id="GO:0005829">
    <property type="term" value="C:cytosol"/>
    <property type="evidence" value="ECO:0000314"/>
    <property type="project" value="FlyBase"/>
</dbReference>
<dbReference type="GO" id="GO:0005634">
    <property type="term" value="C:nucleus"/>
    <property type="evidence" value="ECO:0000314"/>
    <property type="project" value="FlyBase"/>
</dbReference>
<dbReference type="GO" id="GO:0000151">
    <property type="term" value="C:ubiquitin ligase complex"/>
    <property type="evidence" value="ECO:0000314"/>
    <property type="project" value="FlyBase"/>
</dbReference>
<dbReference type="GO" id="GO:1990756">
    <property type="term" value="F:ubiquitin-like ligase-substrate adaptor activity"/>
    <property type="evidence" value="ECO:0000314"/>
    <property type="project" value="FlyBase"/>
</dbReference>
<dbReference type="GO" id="GO:0008270">
    <property type="term" value="F:zinc ion binding"/>
    <property type="evidence" value="ECO:0007669"/>
    <property type="project" value="InterPro"/>
</dbReference>
<dbReference type="GO" id="GO:0035883">
    <property type="term" value="P:enteroendocrine cell differentiation"/>
    <property type="evidence" value="ECO:0000315"/>
    <property type="project" value="FlyBase"/>
</dbReference>
<dbReference type="GO" id="GO:0007173">
    <property type="term" value="P:epidermal growth factor receptor signaling pathway"/>
    <property type="evidence" value="ECO:0000316"/>
    <property type="project" value="FlyBase"/>
</dbReference>
<dbReference type="GO" id="GO:0090090">
    <property type="term" value="P:negative regulation of canonical Wnt signaling pathway"/>
    <property type="evidence" value="ECO:0000314"/>
    <property type="project" value="FlyBase"/>
</dbReference>
<dbReference type="GO" id="GO:0045746">
    <property type="term" value="P:negative regulation of Notch signaling pathway"/>
    <property type="evidence" value="ECO:0000314"/>
    <property type="project" value="FlyBase"/>
</dbReference>
<dbReference type="GO" id="GO:0007219">
    <property type="term" value="P:Notch signaling pathway"/>
    <property type="evidence" value="ECO:0007669"/>
    <property type="project" value="UniProtKB-KW"/>
</dbReference>
<dbReference type="GO" id="GO:0032436">
    <property type="term" value="P:positive regulation of proteasomal ubiquitin-dependent protein catabolic process"/>
    <property type="evidence" value="ECO:0000314"/>
    <property type="project" value="FlyBase"/>
</dbReference>
<dbReference type="GO" id="GO:0010498">
    <property type="term" value="P:proteasomal protein catabolic process"/>
    <property type="evidence" value="ECO:0000314"/>
    <property type="project" value="FlyBase"/>
</dbReference>
<dbReference type="GO" id="GO:0043161">
    <property type="term" value="P:proteasome-mediated ubiquitin-dependent protein catabolic process"/>
    <property type="evidence" value="ECO:0000314"/>
    <property type="project" value="FlyBase"/>
</dbReference>
<dbReference type="GO" id="GO:0007462">
    <property type="term" value="P:R1/R6 cell fate commitment"/>
    <property type="evidence" value="ECO:0000315"/>
    <property type="project" value="FlyBase"/>
</dbReference>
<dbReference type="GO" id="GO:0007465">
    <property type="term" value="P:R7 cell fate commitment"/>
    <property type="evidence" value="ECO:0000315"/>
    <property type="project" value="FlyBase"/>
</dbReference>
<dbReference type="GO" id="GO:0008052">
    <property type="term" value="P:sensory organ boundary specification"/>
    <property type="evidence" value="ECO:0000315"/>
    <property type="project" value="FlyBase"/>
</dbReference>
<dbReference type="GO" id="GO:0007423">
    <property type="term" value="P:sensory organ development"/>
    <property type="evidence" value="ECO:0000315"/>
    <property type="project" value="CACAO"/>
</dbReference>
<dbReference type="GO" id="GO:0016360">
    <property type="term" value="P:sensory organ precursor cell fate determination"/>
    <property type="evidence" value="ECO:0000315"/>
    <property type="project" value="FlyBase"/>
</dbReference>
<dbReference type="GO" id="GO:0045500">
    <property type="term" value="P:sevenless signaling pathway"/>
    <property type="evidence" value="ECO:0000315"/>
    <property type="project" value="FlyBase"/>
</dbReference>
<dbReference type="GO" id="GO:0007601">
    <property type="term" value="P:visual perception"/>
    <property type="evidence" value="ECO:0007669"/>
    <property type="project" value="UniProtKB-KW"/>
</dbReference>
<dbReference type="DisProt" id="DP01122"/>
<dbReference type="IDEAL" id="IID50260"/>
<dbReference type="InterPro" id="IPR012934">
    <property type="entry name" value="Znf_AD"/>
</dbReference>
<dbReference type="Pfam" id="PF07776">
    <property type="entry name" value="zf-AD"/>
    <property type="match status" value="1"/>
</dbReference>
<name>PHYL_DROME</name>
<accession>Q27934</accession>
<accession>C0PV22</accession>
<accession>Q9V721</accession>
<proteinExistence type="evidence at protein level"/>
<keyword id="KW-0002">3D-structure</keyword>
<keyword id="KW-0131">Cell cycle</keyword>
<keyword id="KW-0175">Coiled coil</keyword>
<keyword id="KW-0914">Notch signaling pathway</keyword>
<keyword id="KW-0539">Nucleus</keyword>
<keyword id="KW-1185">Reference proteome</keyword>
<keyword id="KW-0716">Sensory transduction</keyword>
<keyword id="KW-0833">Ubl conjugation pathway</keyword>
<keyword id="KW-0844">Vision</keyword>